<gene>
    <name evidence="1" type="primary">pyrF</name>
    <name type="ordered locus">SF1285</name>
    <name type="ordered locus">S1368</name>
</gene>
<feature type="chain" id="PRO_0000134573" description="Orotidine 5'-phosphate decarboxylase">
    <location>
        <begin position="1"/>
        <end position="245"/>
    </location>
</feature>
<feature type="active site" description="Proton donor" evidence="1">
    <location>
        <position position="73"/>
    </location>
</feature>
<feature type="binding site" evidence="1">
    <location>
        <position position="22"/>
    </location>
    <ligand>
        <name>substrate</name>
    </ligand>
</feature>
<feature type="binding site" evidence="1">
    <location>
        <position position="44"/>
    </location>
    <ligand>
        <name>substrate</name>
    </ligand>
</feature>
<feature type="binding site" evidence="1">
    <location>
        <begin position="71"/>
        <end position="80"/>
    </location>
    <ligand>
        <name>substrate</name>
    </ligand>
</feature>
<feature type="binding site" evidence="1">
    <location>
        <position position="131"/>
    </location>
    <ligand>
        <name>substrate</name>
    </ligand>
</feature>
<feature type="binding site" evidence="1">
    <location>
        <position position="192"/>
    </location>
    <ligand>
        <name>substrate</name>
    </ligand>
</feature>
<feature type="binding site" evidence="1">
    <location>
        <position position="201"/>
    </location>
    <ligand>
        <name>substrate</name>
    </ligand>
</feature>
<feature type="binding site" evidence="1">
    <location>
        <position position="221"/>
    </location>
    <ligand>
        <name>substrate</name>
    </ligand>
</feature>
<feature type="binding site" evidence="1">
    <location>
        <position position="222"/>
    </location>
    <ligand>
        <name>substrate</name>
    </ligand>
</feature>
<evidence type="ECO:0000255" key="1">
    <source>
        <dbReference type="HAMAP-Rule" id="MF_01200"/>
    </source>
</evidence>
<sequence>MTLTASSSSRAVTNSPVVVALDYHNCDDALSFVDKIDPRDCRLKVGKEMFTLFGPQFVRELQQRGFDIFLDLKFHDIPNTAAHAVAAAADLGVWMVNVHASGGARMMTAAREALVPFGKDAPLLIAVTVLTSMEASDLADLGVTLSPADYAERLAALTQKCDLDGVVCSAQEAVRFKQVFGQEFKLVTPGIRPQGSEAGDQRRIMTPEQALAAGVDYMVIGRPVTQSVDPAQTLKAINASLQRSA</sequence>
<comment type="function">
    <text evidence="1">Catalyzes the decarboxylation of orotidine 5'-monophosphate (OMP) to uridine 5'-monophosphate (UMP).</text>
</comment>
<comment type="catalytic activity">
    <reaction evidence="1">
        <text>orotidine 5'-phosphate + H(+) = UMP + CO2</text>
        <dbReference type="Rhea" id="RHEA:11596"/>
        <dbReference type="ChEBI" id="CHEBI:15378"/>
        <dbReference type="ChEBI" id="CHEBI:16526"/>
        <dbReference type="ChEBI" id="CHEBI:57538"/>
        <dbReference type="ChEBI" id="CHEBI:57865"/>
        <dbReference type="EC" id="4.1.1.23"/>
    </reaction>
</comment>
<comment type="pathway">
    <text evidence="1">Pyrimidine metabolism; UMP biosynthesis via de novo pathway; UMP from orotate: step 2/2.</text>
</comment>
<comment type="subunit">
    <text evidence="1">Homodimer.</text>
</comment>
<comment type="similarity">
    <text evidence="1">Belongs to the OMP decarboxylase family. Type 1 subfamily.</text>
</comment>
<name>PYRF_SHIFL</name>
<reference key="1">
    <citation type="journal article" date="2002" name="Nucleic Acids Res.">
        <title>Genome sequence of Shigella flexneri 2a: insights into pathogenicity through comparison with genomes of Escherichia coli K12 and O157.</title>
        <authorList>
            <person name="Jin Q."/>
            <person name="Yuan Z."/>
            <person name="Xu J."/>
            <person name="Wang Y."/>
            <person name="Shen Y."/>
            <person name="Lu W."/>
            <person name="Wang J."/>
            <person name="Liu H."/>
            <person name="Yang J."/>
            <person name="Yang F."/>
            <person name="Zhang X."/>
            <person name="Zhang J."/>
            <person name="Yang G."/>
            <person name="Wu H."/>
            <person name="Qu D."/>
            <person name="Dong J."/>
            <person name="Sun L."/>
            <person name="Xue Y."/>
            <person name="Zhao A."/>
            <person name="Gao Y."/>
            <person name="Zhu J."/>
            <person name="Kan B."/>
            <person name="Ding K."/>
            <person name="Chen S."/>
            <person name="Cheng H."/>
            <person name="Yao Z."/>
            <person name="He B."/>
            <person name="Chen R."/>
            <person name="Ma D."/>
            <person name="Qiang B."/>
            <person name="Wen Y."/>
            <person name="Hou Y."/>
            <person name="Yu J."/>
        </authorList>
    </citation>
    <scope>NUCLEOTIDE SEQUENCE [LARGE SCALE GENOMIC DNA]</scope>
    <source>
        <strain>301 / Serotype 2a</strain>
    </source>
</reference>
<reference key="2">
    <citation type="journal article" date="2003" name="Infect. Immun.">
        <title>Complete genome sequence and comparative genomics of Shigella flexneri serotype 2a strain 2457T.</title>
        <authorList>
            <person name="Wei J."/>
            <person name="Goldberg M.B."/>
            <person name="Burland V."/>
            <person name="Venkatesan M.M."/>
            <person name="Deng W."/>
            <person name="Fournier G."/>
            <person name="Mayhew G.F."/>
            <person name="Plunkett G. III"/>
            <person name="Rose D.J."/>
            <person name="Darling A."/>
            <person name="Mau B."/>
            <person name="Perna N.T."/>
            <person name="Payne S.M."/>
            <person name="Runyen-Janecky L.J."/>
            <person name="Zhou S."/>
            <person name="Schwartz D.C."/>
            <person name="Blattner F.R."/>
        </authorList>
    </citation>
    <scope>NUCLEOTIDE SEQUENCE [LARGE SCALE GENOMIC DNA]</scope>
    <source>
        <strain>ATCC 700930 / 2457T / Serotype 2a</strain>
    </source>
</reference>
<accession>Q83RM1</accession>
<protein>
    <recommendedName>
        <fullName evidence="1">Orotidine 5'-phosphate decarboxylase</fullName>
        <ecNumber evidence="1">4.1.1.23</ecNumber>
    </recommendedName>
    <alternativeName>
        <fullName evidence="1">OMP decarboxylase</fullName>
        <shortName evidence="1">OMPDCase</shortName>
        <shortName evidence="1">OMPdecase</shortName>
    </alternativeName>
</protein>
<organism>
    <name type="scientific">Shigella flexneri</name>
    <dbReference type="NCBI Taxonomy" id="623"/>
    <lineage>
        <taxon>Bacteria</taxon>
        <taxon>Pseudomonadati</taxon>
        <taxon>Pseudomonadota</taxon>
        <taxon>Gammaproteobacteria</taxon>
        <taxon>Enterobacterales</taxon>
        <taxon>Enterobacteriaceae</taxon>
        <taxon>Shigella</taxon>
    </lineage>
</organism>
<keyword id="KW-0210">Decarboxylase</keyword>
<keyword id="KW-0456">Lyase</keyword>
<keyword id="KW-0665">Pyrimidine biosynthesis</keyword>
<keyword id="KW-1185">Reference proteome</keyword>
<dbReference type="EC" id="4.1.1.23" evidence="1"/>
<dbReference type="EMBL" id="AE005674">
    <property type="protein sequence ID" value="AAN42897.1"/>
    <property type="molecule type" value="Genomic_DNA"/>
</dbReference>
<dbReference type="EMBL" id="AE014073">
    <property type="protein sequence ID" value="AAP16781.1"/>
    <property type="molecule type" value="Genomic_DNA"/>
</dbReference>
<dbReference type="RefSeq" id="NP_707190.1">
    <property type="nucleotide sequence ID" value="NC_004337.2"/>
</dbReference>
<dbReference type="RefSeq" id="WP_000176258.1">
    <property type="nucleotide sequence ID" value="NZ_WPGW01000009.1"/>
</dbReference>
<dbReference type="SMR" id="Q83RM1"/>
<dbReference type="STRING" id="198214.SF1285"/>
<dbReference type="PaxDb" id="198214-SF1285"/>
<dbReference type="GeneID" id="1024264"/>
<dbReference type="KEGG" id="sfl:SF1285"/>
<dbReference type="KEGG" id="sfx:S1368"/>
<dbReference type="PATRIC" id="fig|198214.7.peg.1507"/>
<dbReference type="HOGENOM" id="CLU_067069_0_0_6"/>
<dbReference type="UniPathway" id="UPA00070">
    <property type="reaction ID" value="UER00120"/>
</dbReference>
<dbReference type="Proteomes" id="UP000001006">
    <property type="component" value="Chromosome"/>
</dbReference>
<dbReference type="Proteomes" id="UP000002673">
    <property type="component" value="Chromosome"/>
</dbReference>
<dbReference type="GO" id="GO:0005829">
    <property type="term" value="C:cytosol"/>
    <property type="evidence" value="ECO:0007669"/>
    <property type="project" value="TreeGrafter"/>
</dbReference>
<dbReference type="GO" id="GO:0004590">
    <property type="term" value="F:orotidine-5'-phosphate decarboxylase activity"/>
    <property type="evidence" value="ECO:0007669"/>
    <property type="project" value="UniProtKB-UniRule"/>
</dbReference>
<dbReference type="GO" id="GO:0006207">
    <property type="term" value="P:'de novo' pyrimidine nucleobase biosynthetic process"/>
    <property type="evidence" value="ECO:0007669"/>
    <property type="project" value="InterPro"/>
</dbReference>
<dbReference type="GO" id="GO:0044205">
    <property type="term" value="P:'de novo' UMP biosynthetic process"/>
    <property type="evidence" value="ECO:0007669"/>
    <property type="project" value="UniProtKB-UniRule"/>
</dbReference>
<dbReference type="CDD" id="cd04725">
    <property type="entry name" value="OMP_decarboxylase_like"/>
    <property type="match status" value="1"/>
</dbReference>
<dbReference type="FunFam" id="3.20.20.70:FF:000015">
    <property type="entry name" value="Orotidine 5'-phosphate decarboxylase"/>
    <property type="match status" value="1"/>
</dbReference>
<dbReference type="Gene3D" id="3.20.20.70">
    <property type="entry name" value="Aldolase class I"/>
    <property type="match status" value="1"/>
</dbReference>
<dbReference type="HAMAP" id="MF_01200_B">
    <property type="entry name" value="OMPdecase_type1_B"/>
    <property type="match status" value="1"/>
</dbReference>
<dbReference type="InterPro" id="IPR013785">
    <property type="entry name" value="Aldolase_TIM"/>
</dbReference>
<dbReference type="InterPro" id="IPR014732">
    <property type="entry name" value="OMPdecase"/>
</dbReference>
<dbReference type="InterPro" id="IPR018089">
    <property type="entry name" value="OMPdecase_AS"/>
</dbReference>
<dbReference type="InterPro" id="IPR047596">
    <property type="entry name" value="OMPdecase_bac"/>
</dbReference>
<dbReference type="InterPro" id="IPR001754">
    <property type="entry name" value="OMPdeCOase_dom"/>
</dbReference>
<dbReference type="InterPro" id="IPR011060">
    <property type="entry name" value="RibuloseP-bd_barrel"/>
</dbReference>
<dbReference type="NCBIfam" id="NF001273">
    <property type="entry name" value="PRK00230.1"/>
    <property type="match status" value="1"/>
</dbReference>
<dbReference type="NCBIfam" id="TIGR01740">
    <property type="entry name" value="pyrF"/>
    <property type="match status" value="1"/>
</dbReference>
<dbReference type="PANTHER" id="PTHR32119">
    <property type="entry name" value="OROTIDINE 5'-PHOSPHATE DECARBOXYLASE"/>
    <property type="match status" value="1"/>
</dbReference>
<dbReference type="PANTHER" id="PTHR32119:SF2">
    <property type="entry name" value="OROTIDINE 5'-PHOSPHATE DECARBOXYLASE"/>
    <property type="match status" value="1"/>
</dbReference>
<dbReference type="Pfam" id="PF00215">
    <property type="entry name" value="OMPdecase"/>
    <property type="match status" value="1"/>
</dbReference>
<dbReference type="SMART" id="SM00934">
    <property type="entry name" value="OMPdecase"/>
    <property type="match status" value="1"/>
</dbReference>
<dbReference type="SUPFAM" id="SSF51366">
    <property type="entry name" value="Ribulose-phoshate binding barrel"/>
    <property type="match status" value="1"/>
</dbReference>
<dbReference type="PROSITE" id="PS00156">
    <property type="entry name" value="OMPDECASE"/>
    <property type="match status" value="1"/>
</dbReference>
<proteinExistence type="inferred from homology"/>